<reference key="1">
    <citation type="journal article" date="1998" name="Science">
        <title>Genome sequence of the nematode C. elegans: a platform for investigating biology.</title>
        <authorList>
            <consortium name="The C. elegans sequencing consortium"/>
        </authorList>
    </citation>
    <scope>NUCLEOTIDE SEQUENCE [LARGE SCALE GENOMIC DNA]</scope>
    <source>
        <strain>Bristol N2</strain>
    </source>
</reference>
<organism>
    <name type="scientific">Caenorhabditis elegans</name>
    <dbReference type="NCBI Taxonomy" id="6239"/>
    <lineage>
        <taxon>Eukaryota</taxon>
        <taxon>Metazoa</taxon>
        <taxon>Ecdysozoa</taxon>
        <taxon>Nematoda</taxon>
        <taxon>Chromadorea</taxon>
        <taxon>Rhabditida</taxon>
        <taxon>Rhabditina</taxon>
        <taxon>Rhabditomorpha</taxon>
        <taxon>Rhabditoidea</taxon>
        <taxon>Rhabditidae</taxon>
        <taxon>Peloderinae</taxon>
        <taxon>Caenorhabditis</taxon>
    </lineage>
</organism>
<gene>
    <name type="ORF">B0302.4</name>
</gene>
<proteinExistence type="predicted"/>
<sequence length="31" mass="3866">MNHGSFFKATRPGLDHWFYWSKKNRWQTILL</sequence>
<feature type="chain" id="PRO_0000065061" description="Uncharacterized protein B0302.4">
    <location>
        <begin position="1"/>
        <end position="31"/>
    </location>
</feature>
<dbReference type="EMBL" id="FO080160">
    <property type="protein sequence ID" value="CCD61699.1"/>
    <property type="molecule type" value="Genomic_DNA"/>
</dbReference>
<dbReference type="PIR" id="T15314">
    <property type="entry name" value="T15314"/>
</dbReference>
<dbReference type="RefSeq" id="NP_001379565.1">
    <property type="nucleotide sequence ID" value="NM_001392917.1"/>
</dbReference>
<dbReference type="RefSeq" id="NP_510781.2">
    <property type="nucleotide sequence ID" value="NM_078380.3"/>
</dbReference>
<dbReference type="SMR" id="Q10927"/>
<dbReference type="STRING" id="6239.B0302.4.1"/>
<dbReference type="PaxDb" id="6239-B0302.4"/>
<dbReference type="EnsemblMetazoa" id="B0302.4.1">
    <property type="protein sequence ID" value="B0302.4.1"/>
    <property type="gene ID" value="WBGene00015121"/>
</dbReference>
<dbReference type="GeneID" id="181913"/>
<dbReference type="UCSC" id="B0302.4">
    <property type="organism name" value="c. elegans"/>
</dbReference>
<dbReference type="AGR" id="WB:WBGene00015121"/>
<dbReference type="WormBase" id="B0302.4">
    <property type="protein sequence ID" value="CE35210"/>
    <property type="gene ID" value="WBGene00015121"/>
</dbReference>
<dbReference type="HOGENOM" id="CLU_3399792_0_0_1"/>
<dbReference type="InParanoid" id="Q10927"/>
<dbReference type="PRO" id="PR:Q10927"/>
<dbReference type="Proteomes" id="UP000001940">
    <property type="component" value="Chromosome X"/>
</dbReference>
<dbReference type="Bgee" id="WBGene00015121">
    <property type="expression patterns" value="Expressed in embryo and 3 other cell types or tissues"/>
</dbReference>
<name>YWR4_CAEEL</name>
<accession>Q10927</accession>
<protein>
    <recommendedName>
        <fullName>Uncharacterized protein B0302.4</fullName>
    </recommendedName>
</protein>
<keyword id="KW-1185">Reference proteome</keyword>